<comment type="function">
    <text evidence="1">Part of a sulfur-relay system required for 2-thiolation of 5-methylaminomethyl-2-thiouridine (mnm(5)s(2)U) at tRNA wobble positions.</text>
</comment>
<comment type="subunit">
    <text evidence="1">Heterohexamer, formed by a dimer of trimers. The hexameric TusBCD complex contains 2 copies each of TusB, TusC and TusD. The TusBCD complex interacts with TusE.</text>
</comment>
<comment type="subcellular location">
    <subcellularLocation>
        <location evidence="1">Cytoplasm</location>
    </subcellularLocation>
</comment>
<comment type="similarity">
    <text evidence="1">Belongs to the DsrH/TusB family.</text>
</comment>
<evidence type="ECO:0000255" key="1">
    <source>
        <dbReference type="HAMAP-Rule" id="MF_01564"/>
    </source>
</evidence>
<organism>
    <name type="scientific">Salmonella gallinarum (strain 287/91 / NCTC 13346)</name>
    <dbReference type="NCBI Taxonomy" id="550538"/>
    <lineage>
        <taxon>Bacteria</taxon>
        <taxon>Pseudomonadati</taxon>
        <taxon>Pseudomonadota</taxon>
        <taxon>Gammaproteobacteria</taxon>
        <taxon>Enterobacterales</taxon>
        <taxon>Enterobacteriaceae</taxon>
        <taxon>Salmonella</taxon>
    </lineage>
</organism>
<gene>
    <name evidence="1" type="primary">tusB</name>
    <name type="ordered locus">SG3990</name>
</gene>
<feature type="chain" id="PRO_1000147189" description="Protein TusB">
    <location>
        <begin position="1"/>
        <end position="95"/>
    </location>
</feature>
<reference key="1">
    <citation type="journal article" date="2008" name="Genome Res.">
        <title>Comparative genome analysis of Salmonella enteritidis PT4 and Salmonella gallinarum 287/91 provides insights into evolutionary and host adaptation pathways.</title>
        <authorList>
            <person name="Thomson N.R."/>
            <person name="Clayton D.J."/>
            <person name="Windhorst D."/>
            <person name="Vernikos G."/>
            <person name="Davidson S."/>
            <person name="Churcher C."/>
            <person name="Quail M.A."/>
            <person name="Stevens M."/>
            <person name="Jones M.A."/>
            <person name="Watson M."/>
            <person name="Barron A."/>
            <person name="Layton A."/>
            <person name="Pickard D."/>
            <person name="Kingsley R.A."/>
            <person name="Bignell A."/>
            <person name="Clark L."/>
            <person name="Harris B."/>
            <person name="Ormond D."/>
            <person name="Abdellah Z."/>
            <person name="Brooks K."/>
            <person name="Cherevach I."/>
            <person name="Chillingworth T."/>
            <person name="Woodward J."/>
            <person name="Norberczak H."/>
            <person name="Lord A."/>
            <person name="Arrowsmith C."/>
            <person name="Jagels K."/>
            <person name="Moule S."/>
            <person name="Mungall K."/>
            <person name="Saunders M."/>
            <person name="Whitehead S."/>
            <person name="Chabalgoity J.A."/>
            <person name="Maskell D."/>
            <person name="Humphreys T."/>
            <person name="Roberts M."/>
            <person name="Barrow P.A."/>
            <person name="Dougan G."/>
            <person name="Parkhill J."/>
        </authorList>
    </citation>
    <scope>NUCLEOTIDE SEQUENCE [LARGE SCALE GENOMIC DNA]</scope>
    <source>
        <strain>287/91 / NCTC 13346</strain>
    </source>
</reference>
<protein>
    <recommendedName>
        <fullName evidence="1">Protein TusB</fullName>
    </recommendedName>
    <alternativeName>
        <fullName evidence="1">tRNA 2-thiouridine synthesizing protein B</fullName>
    </alternativeName>
</protein>
<name>TUSB_SALG2</name>
<sequence>MLHTLPHCASSVDFPALLRLLKEGDALLLLQDGVTVAIEGNRFLESLRDAPITVYALKEDIDARGLGGQISDSVVRVDYTDFVRLTVKYANQMAW</sequence>
<dbReference type="EMBL" id="AM933173">
    <property type="protein sequence ID" value="CAR39760.1"/>
    <property type="molecule type" value="Genomic_DNA"/>
</dbReference>
<dbReference type="RefSeq" id="WP_000903399.1">
    <property type="nucleotide sequence ID" value="NC_011274.1"/>
</dbReference>
<dbReference type="SMR" id="B5RH06"/>
<dbReference type="KEGG" id="seg:SG3990"/>
<dbReference type="HOGENOM" id="CLU_166087_2_1_6"/>
<dbReference type="Proteomes" id="UP000008321">
    <property type="component" value="Chromosome"/>
</dbReference>
<dbReference type="GO" id="GO:1990228">
    <property type="term" value="C:sulfurtransferase complex"/>
    <property type="evidence" value="ECO:0007669"/>
    <property type="project" value="TreeGrafter"/>
</dbReference>
<dbReference type="GO" id="GO:0002143">
    <property type="term" value="P:tRNA wobble position uridine thiolation"/>
    <property type="evidence" value="ECO:0007669"/>
    <property type="project" value="InterPro"/>
</dbReference>
<dbReference type="FunFam" id="3.40.1260.10:FF:000002">
    <property type="entry name" value="Sulfurtransferase TusB"/>
    <property type="match status" value="1"/>
</dbReference>
<dbReference type="Gene3D" id="3.40.1260.10">
    <property type="entry name" value="DsrEFH-like"/>
    <property type="match status" value="1"/>
</dbReference>
<dbReference type="HAMAP" id="MF_01564">
    <property type="entry name" value="Thiourid_synth_B"/>
    <property type="match status" value="1"/>
</dbReference>
<dbReference type="InterPro" id="IPR027396">
    <property type="entry name" value="DsrEFH-like"/>
</dbReference>
<dbReference type="InterPro" id="IPR023526">
    <property type="entry name" value="Sulphur_relay_TusB"/>
</dbReference>
<dbReference type="InterPro" id="IPR007215">
    <property type="entry name" value="Sulphur_relay_TusB/DsrH"/>
</dbReference>
<dbReference type="NCBIfam" id="NF010035">
    <property type="entry name" value="PRK13510.1"/>
    <property type="match status" value="1"/>
</dbReference>
<dbReference type="NCBIfam" id="TIGR03011">
    <property type="entry name" value="sulf_tusB_dsrH"/>
    <property type="match status" value="1"/>
</dbReference>
<dbReference type="PANTHER" id="PTHR37526">
    <property type="entry name" value="PROTEIN TUSB"/>
    <property type="match status" value="1"/>
</dbReference>
<dbReference type="PANTHER" id="PTHR37526:SF1">
    <property type="entry name" value="PROTEIN TUSB"/>
    <property type="match status" value="1"/>
</dbReference>
<dbReference type="Pfam" id="PF04077">
    <property type="entry name" value="DsrH"/>
    <property type="match status" value="1"/>
</dbReference>
<dbReference type="SUPFAM" id="SSF75169">
    <property type="entry name" value="DsrEFH-like"/>
    <property type="match status" value="1"/>
</dbReference>
<proteinExistence type="inferred from homology"/>
<keyword id="KW-0963">Cytoplasm</keyword>
<keyword id="KW-0819">tRNA processing</keyword>
<accession>B5RH06</accession>